<reference key="1">
    <citation type="journal article" date="2009" name="PLoS Genet.">
        <title>Organised genome dynamics in the Escherichia coli species results in highly diverse adaptive paths.</title>
        <authorList>
            <person name="Touchon M."/>
            <person name="Hoede C."/>
            <person name="Tenaillon O."/>
            <person name="Barbe V."/>
            <person name="Baeriswyl S."/>
            <person name="Bidet P."/>
            <person name="Bingen E."/>
            <person name="Bonacorsi S."/>
            <person name="Bouchier C."/>
            <person name="Bouvet O."/>
            <person name="Calteau A."/>
            <person name="Chiapello H."/>
            <person name="Clermont O."/>
            <person name="Cruveiller S."/>
            <person name="Danchin A."/>
            <person name="Diard M."/>
            <person name="Dossat C."/>
            <person name="Karoui M.E."/>
            <person name="Frapy E."/>
            <person name="Garry L."/>
            <person name="Ghigo J.M."/>
            <person name="Gilles A.M."/>
            <person name="Johnson J."/>
            <person name="Le Bouguenec C."/>
            <person name="Lescat M."/>
            <person name="Mangenot S."/>
            <person name="Martinez-Jehanne V."/>
            <person name="Matic I."/>
            <person name="Nassif X."/>
            <person name="Oztas S."/>
            <person name="Petit M.A."/>
            <person name="Pichon C."/>
            <person name="Rouy Z."/>
            <person name="Ruf C.S."/>
            <person name="Schneider D."/>
            <person name="Tourret J."/>
            <person name="Vacherie B."/>
            <person name="Vallenet D."/>
            <person name="Medigue C."/>
            <person name="Rocha E.P.C."/>
            <person name="Denamur E."/>
        </authorList>
    </citation>
    <scope>NUCLEOTIDE SEQUENCE [LARGE SCALE GENOMIC DNA]</scope>
    <source>
        <strain>UMN026 / ExPEC</strain>
    </source>
</reference>
<evidence type="ECO:0000255" key="1">
    <source>
        <dbReference type="HAMAP-Rule" id="MF_01535"/>
    </source>
</evidence>
<proteinExistence type="inferred from homology"/>
<feature type="chain" id="PRO_1000146543" description="Rhamnulokinase">
    <location>
        <begin position="1"/>
        <end position="489"/>
    </location>
</feature>
<feature type="active site" description="Proton acceptor" evidence="1">
    <location>
        <position position="237"/>
    </location>
</feature>
<feature type="binding site" evidence="1">
    <location>
        <begin position="13"/>
        <end position="17"/>
    </location>
    <ligand>
        <name>ATP</name>
        <dbReference type="ChEBI" id="CHEBI:30616"/>
    </ligand>
</feature>
<feature type="binding site" evidence="1">
    <location>
        <position position="83"/>
    </location>
    <ligand>
        <name>substrate</name>
    </ligand>
</feature>
<feature type="binding site" evidence="1">
    <location>
        <begin position="236"/>
        <end position="238"/>
    </location>
    <ligand>
        <name>substrate</name>
    </ligand>
</feature>
<feature type="binding site" evidence="1">
    <location>
        <position position="259"/>
    </location>
    <ligand>
        <name>ATP</name>
        <dbReference type="ChEBI" id="CHEBI:30616"/>
    </ligand>
</feature>
<feature type="binding site" evidence="1">
    <location>
        <position position="296"/>
    </location>
    <ligand>
        <name>substrate</name>
    </ligand>
</feature>
<feature type="binding site" evidence="1">
    <location>
        <position position="304"/>
    </location>
    <ligand>
        <name>ATP</name>
        <dbReference type="ChEBI" id="CHEBI:30616"/>
    </ligand>
</feature>
<feature type="binding site" evidence="1">
    <location>
        <position position="402"/>
    </location>
    <ligand>
        <name>ATP</name>
        <dbReference type="ChEBI" id="CHEBI:30616"/>
    </ligand>
</feature>
<feature type="disulfide bond" evidence="1">
    <location>
        <begin position="68"/>
        <end position="222"/>
    </location>
</feature>
<feature type="disulfide bond" evidence="1">
    <location>
        <begin position="353"/>
        <end position="370"/>
    </location>
</feature>
<feature type="disulfide bond" evidence="1">
    <location>
        <begin position="413"/>
        <end position="417"/>
    </location>
</feature>
<protein>
    <recommendedName>
        <fullName evidence="1">Rhamnulokinase</fullName>
        <shortName evidence="1">RhaB</shortName>
        <ecNumber evidence="1">2.7.1.5</ecNumber>
    </recommendedName>
    <alternativeName>
        <fullName evidence="1">ATP:L-rhamnulose phosphotransferase</fullName>
    </alternativeName>
    <alternativeName>
        <fullName evidence="1">L-rhamnulose 1-kinase</fullName>
    </alternativeName>
    <alternativeName>
        <fullName evidence="1">Rhamnulose kinase</fullName>
    </alternativeName>
</protein>
<name>RHAB_ECOLU</name>
<organism>
    <name type="scientific">Escherichia coli O17:K52:H18 (strain UMN026 / ExPEC)</name>
    <dbReference type="NCBI Taxonomy" id="585056"/>
    <lineage>
        <taxon>Bacteria</taxon>
        <taxon>Pseudomonadati</taxon>
        <taxon>Pseudomonadota</taxon>
        <taxon>Gammaproteobacteria</taxon>
        <taxon>Enterobacterales</taxon>
        <taxon>Enterobacteriaceae</taxon>
        <taxon>Escherichia</taxon>
    </lineage>
</organism>
<dbReference type="EC" id="2.7.1.5" evidence="1"/>
<dbReference type="EMBL" id="CU928163">
    <property type="protein sequence ID" value="CAR15559.1"/>
    <property type="molecule type" value="Genomic_DNA"/>
</dbReference>
<dbReference type="RefSeq" id="WP_000144068.1">
    <property type="nucleotide sequence ID" value="NC_011751.1"/>
</dbReference>
<dbReference type="RefSeq" id="YP_002415048.1">
    <property type="nucleotide sequence ID" value="NC_011751.1"/>
</dbReference>
<dbReference type="SMR" id="B7NFK2"/>
<dbReference type="STRING" id="585056.ECUMN_4432"/>
<dbReference type="KEGG" id="eum:ECUMN_4432"/>
<dbReference type="PATRIC" id="fig|585056.7.peg.4601"/>
<dbReference type="HOGENOM" id="CLU_039395_0_0_6"/>
<dbReference type="UniPathway" id="UPA00541">
    <property type="reaction ID" value="UER00602"/>
</dbReference>
<dbReference type="Proteomes" id="UP000007097">
    <property type="component" value="Chromosome"/>
</dbReference>
<dbReference type="GO" id="GO:0005829">
    <property type="term" value="C:cytosol"/>
    <property type="evidence" value="ECO:0007669"/>
    <property type="project" value="TreeGrafter"/>
</dbReference>
<dbReference type="GO" id="GO:0005524">
    <property type="term" value="F:ATP binding"/>
    <property type="evidence" value="ECO:0007669"/>
    <property type="project" value="UniProtKB-KW"/>
</dbReference>
<dbReference type="GO" id="GO:0004370">
    <property type="term" value="F:glycerol kinase activity"/>
    <property type="evidence" value="ECO:0007669"/>
    <property type="project" value="TreeGrafter"/>
</dbReference>
<dbReference type="GO" id="GO:0008993">
    <property type="term" value="F:rhamnulokinase activity"/>
    <property type="evidence" value="ECO:0007669"/>
    <property type="project" value="UniProtKB-UniRule"/>
</dbReference>
<dbReference type="GO" id="GO:0006071">
    <property type="term" value="P:glycerol metabolic process"/>
    <property type="evidence" value="ECO:0007669"/>
    <property type="project" value="TreeGrafter"/>
</dbReference>
<dbReference type="GO" id="GO:0019301">
    <property type="term" value="P:rhamnose catabolic process"/>
    <property type="evidence" value="ECO:0007669"/>
    <property type="project" value="UniProtKB-UniRule"/>
</dbReference>
<dbReference type="CDD" id="cd07771">
    <property type="entry name" value="ASKHA_NBD_FGGY_RhaB-like"/>
    <property type="match status" value="1"/>
</dbReference>
<dbReference type="FunFam" id="3.30.420.40:FF:000064">
    <property type="entry name" value="Rhamnulokinase"/>
    <property type="match status" value="1"/>
</dbReference>
<dbReference type="FunFam" id="3.30.420.40:FF:000073">
    <property type="entry name" value="Rhamnulokinase"/>
    <property type="match status" value="1"/>
</dbReference>
<dbReference type="Gene3D" id="3.30.420.40">
    <property type="match status" value="2"/>
</dbReference>
<dbReference type="HAMAP" id="MF_01535">
    <property type="entry name" value="Rhamnulokinase"/>
    <property type="match status" value="1"/>
</dbReference>
<dbReference type="InterPro" id="IPR043129">
    <property type="entry name" value="ATPase_NBD"/>
</dbReference>
<dbReference type="InterPro" id="IPR018485">
    <property type="entry name" value="FGGY_C"/>
</dbReference>
<dbReference type="InterPro" id="IPR018484">
    <property type="entry name" value="FGGY_N"/>
</dbReference>
<dbReference type="InterPro" id="IPR013449">
    <property type="entry name" value="Rhamnulokinase"/>
</dbReference>
<dbReference type="NCBIfam" id="NF007925">
    <property type="entry name" value="PRK10640.1"/>
    <property type="match status" value="1"/>
</dbReference>
<dbReference type="NCBIfam" id="TIGR02627">
    <property type="entry name" value="rhamnulo_kin"/>
    <property type="match status" value="1"/>
</dbReference>
<dbReference type="PANTHER" id="PTHR10196:SF93">
    <property type="entry name" value="L-RHAMNULOKINASE"/>
    <property type="match status" value="1"/>
</dbReference>
<dbReference type="PANTHER" id="PTHR10196">
    <property type="entry name" value="SUGAR KINASE"/>
    <property type="match status" value="1"/>
</dbReference>
<dbReference type="Pfam" id="PF02782">
    <property type="entry name" value="FGGY_C"/>
    <property type="match status" value="1"/>
</dbReference>
<dbReference type="Pfam" id="PF00370">
    <property type="entry name" value="FGGY_N"/>
    <property type="match status" value="1"/>
</dbReference>
<dbReference type="SUPFAM" id="SSF53067">
    <property type="entry name" value="Actin-like ATPase domain"/>
    <property type="match status" value="2"/>
</dbReference>
<sequence length="489" mass="54001">MTFRNCVAVDLGASSGRVMLARYERECRSLTLREIHRFNNGLHSQNGYVTWDVDSLESAIRLGLNKVCEEGIRIDSIGIDTWGVDFVLLDQQGQRVGLPVAYRDSRTNGLMAQAQQQLGKRDIYQRSGIQFLPFNTIYQLRALTEQQPELIPHIAHALLMADYFSYRLTGEMNWEYTNATTTQLVNINSDDWDESLLAWSGANKAWFGRPTHPGNVIGHWICPQGNEIPVVAVASHDTASAVIASPLSGSRAAYLSSGTWSLMGFESQTPFTNDTALAANITNEGGAEGRYRVLKNIMGLWLLQRVLQERQINDLPALIAATQALPACRFTINPNDDRFINPDEMCSEIQAACRETAQPIPESDAELARCIFDSLALLYADVLHELAQLRGEDFSQLHIVGGGCQNALLNQLCADACGIRVIAGPVEASTLGNIGIQLMTLDELNNVDDFRQVVSTTANLTTFTPNPDSEIAHYVAQIHSTRQTKELCA</sequence>
<keyword id="KW-0067">ATP-binding</keyword>
<keyword id="KW-1015">Disulfide bond</keyword>
<keyword id="KW-0418">Kinase</keyword>
<keyword id="KW-0460">Magnesium</keyword>
<keyword id="KW-0547">Nucleotide-binding</keyword>
<keyword id="KW-0684">Rhamnose metabolism</keyword>
<keyword id="KW-0808">Transferase</keyword>
<accession>B7NFK2</accession>
<gene>
    <name evidence="1" type="primary">rhaB</name>
    <name type="ordered locus">ECUMN_4432</name>
</gene>
<comment type="function">
    <text evidence="1">Involved in the catabolism of L-rhamnose (6-deoxy-L-mannose). Catalyzes the transfer of the gamma-phosphate group from ATP to the 1-hydroxyl group of L-rhamnulose to yield L-rhamnulose 1-phosphate.</text>
</comment>
<comment type="catalytic activity">
    <reaction evidence="1">
        <text>L-rhamnulose + ATP = L-rhamnulose 1-phosphate + ADP + H(+)</text>
        <dbReference type="Rhea" id="RHEA:20117"/>
        <dbReference type="ChEBI" id="CHEBI:15378"/>
        <dbReference type="ChEBI" id="CHEBI:17897"/>
        <dbReference type="ChEBI" id="CHEBI:30616"/>
        <dbReference type="ChEBI" id="CHEBI:58313"/>
        <dbReference type="ChEBI" id="CHEBI:456216"/>
        <dbReference type="EC" id="2.7.1.5"/>
    </reaction>
</comment>
<comment type="cofactor">
    <cofactor evidence="1">
        <name>Mg(2+)</name>
        <dbReference type="ChEBI" id="CHEBI:18420"/>
    </cofactor>
</comment>
<comment type="pathway">
    <text evidence="1">Carbohydrate degradation; L-rhamnose degradation; glycerone phosphate from L-rhamnose: step 2/3.</text>
</comment>
<comment type="subunit">
    <text evidence="1">Monomer.</text>
</comment>
<comment type="similarity">
    <text evidence="1">Belongs to the rhamnulokinase family.</text>
</comment>